<keyword id="KW-0004">4Fe-4S</keyword>
<keyword id="KW-0963">Cytoplasm</keyword>
<keyword id="KW-1015">Disulfide bond</keyword>
<keyword id="KW-0408">Iron</keyword>
<keyword id="KW-0411">Iron-sulfur</keyword>
<keyword id="KW-0479">Metal-binding</keyword>
<keyword id="KW-0489">Methyltransferase</keyword>
<keyword id="KW-1185">Reference proteome</keyword>
<keyword id="KW-0698">rRNA processing</keyword>
<keyword id="KW-0949">S-adenosyl-L-methionine</keyword>
<keyword id="KW-0808">Transferase</keyword>
<keyword id="KW-0819">tRNA processing</keyword>
<protein>
    <recommendedName>
        <fullName evidence="1">Dual-specificity RNA methyltransferase RlmN</fullName>
        <ecNumber evidence="1">2.1.1.192</ecNumber>
    </recommendedName>
    <alternativeName>
        <fullName evidence="1">23S rRNA (adenine(2503)-C(2))-methyltransferase</fullName>
    </alternativeName>
    <alternativeName>
        <fullName evidence="1">23S rRNA m2A2503 methyltransferase</fullName>
    </alternativeName>
    <alternativeName>
        <fullName evidence="1">Ribosomal RNA large subunit methyltransferase N</fullName>
    </alternativeName>
    <alternativeName>
        <fullName evidence="1">tRNA (adenine(37)-C(2))-methyltransferase</fullName>
    </alternativeName>
    <alternativeName>
        <fullName evidence="1">tRNA m2A37 methyltransferase</fullName>
    </alternativeName>
</protein>
<reference key="1">
    <citation type="journal article" date="2005" name="Nucleic Acids Res.">
        <title>Genomic blueprint of Hahella chejuensis, a marine microbe producing an algicidal agent.</title>
        <authorList>
            <person name="Jeong H."/>
            <person name="Yim J.H."/>
            <person name="Lee C."/>
            <person name="Choi S.-H."/>
            <person name="Park Y.K."/>
            <person name="Yoon S.H."/>
            <person name="Hur C.-G."/>
            <person name="Kang H.-Y."/>
            <person name="Kim D."/>
            <person name="Lee H.H."/>
            <person name="Park K.H."/>
            <person name="Park S.-H."/>
            <person name="Park H.-S."/>
            <person name="Lee H.K."/>
            <person name="Oh T.K."/>
            <person name="Kim J.F."/>
        </authorList>
    </citation>
    <scope>NUCLEOTIDE SEQUENCE [LARGE SCALE GENOMIC DNA]</scope>
    <source>
        <strain>KCTC 2396</strain>
    </source>
</reference>
<evidence type="ECO:0000255" key="1">
    <source>
        <dbReference type="HAMAP-Rule" id="MF_01849"/>
    </source>
</evidence>
<evidence type="ECO:0000255" key="2">
    <source>
        <dbReference type="PROSITE-ProRule" id="PRU01266"/>
    </source>
</evidence>
<comment type="function">
    <text evidence="1">Specifically methylates position 2 of adenine 2503 in 23S rRNA and position 2 of adenine 37 in tRNAs. m2A2503 modification seems to play a crucial role in the proofreading step occurring at the peptidyl transferase center and thus would serve to optimize ribosomal fidelity.</text>
</comment>
<comment type="catalytic activity">
    <reaction evidence="1">
        <text>adenosine(2503) in 23S rRNA + 2 reduced [2Fe-2S]-[ferredoxin] + 2 S-adenosyl-L-methionine = 2-methyladenosine(2503) in 23S rRNA + 5'-deoxyadenosine + L-methionine + 2 oxidized [2Fe-2S]-[ferredoxin] + S-adenosyl-L-homocysteine</text>
        <dbReference type="Rhea" id="RHEA:42916"/>
        <dbReference type="Rhea" id="RHEA-COMP:10000"/>
        <dbReference type="Rhea" id="RHEA-COMP:10001"/>
        <dbReference type="Rhea" id="RHEA-COMP:10152"/>
        <dbReference type="Rhea" id="RHEA-COMP:10282"/>
        <dbReference type="ChEBI" id="CHEBI:17319"/>
        <dbReference type="ChEBI" id="CHEBI:33737"/>
        <dbReference type="ChEBI" id="CHEBI:33738"/>
        <dbReference type="ChEBI" id="CHEBI:57844"/>
        <dbReference type="ChEBI" id="CHEBI:57856"/>
        <dbReference type="ChEBI" id="CHEBI:59789"/>
        <dbReference type="ChEBI" id="CHEBI:74411"/>
        <dbReference type="ChEBI" id="CHEBI:74497"/>
        <dbReference type="EC" id="2.1.1.192"/>
    </reaction>
</comment>
<comment type="catalytic activity">
    <reaction evidence="1">
        <text>adenosine(37) in tRNA + 2 reduced [2Fe-2S]-[ferredoxin] + 2 S-adenosyl-L-methionine = 2-methyladenosine(37) in tRNA + 5'-deoxyadenosine + L-methionine + 2 oxidized [2Fe-2S]-[ferredoxin] + S-adenosyl-L-homocysteine</text>
        <dbReference type="Rhea" id="RHEA:43332"/>
        <dbReference type="Rhea" id="RHEA-COMP:10000"/>
        <dbReference type="Rhea" id="RHEA-COMP:10001"/>
        <dbReference type="Rhea" id="RHEA-COMP:10162"/>
        <dbReference type="Rhea" id="RHEA-COMP:10485"/>
        <dbReference type="ChEBI" id="CHEBI:17319"/>
        <dbReference type="ChEBI" id="CHEBI:33737"/>
        <dbReference type="ChEBI" id="CHEBI:33738"/>
        <dbReference type="ChEBI" id="CHEBI:57844"/>
        <dbReference type="ChEBI" id="CHEBI:57856"/>
        <dbReference type="ChEBI" id="CHEBI:59789"/>
        <dbReference type="ChEBI" id="CHEBI:74411"/>
        <dbReference type="ChEBI" id="CHEBI:74497"/>
        <dbReference type="EC" id="2.1.1.192"/>
    </reaction>
</comment>
<comment type="cofactor">
    <cofactor evidence="1">
        <name>[4Fe-4S] cluster</name>
        <dbReference type="ChEBI" id="CHEBI:49883"/>
    </cofactor>
    <text evidence="1">Binds 1 [4Fe-4S] cluster. The cluster is coordinated with 3 cysteines and an exchangeable S-adenosyl-L-methionine.</text>
</comment>
<comment type="subcellular location">
    <subcellularLocation>
        <location evidence="1">Cytoplasm</location>
    </subcellularLocation>
</comment>
<comment type="miscellaneous">
    <text evidence="1">Reaction proceeds by a ping-pong mechanism involving intermediate methylation of a conserved cysteine residue.</text>
</comment>
<comment type="similarity">
    <text evidence="1">Belongs to the radical SAM superfamily. RlmN family.</text>
</comment>
<gene>
    <name evidence="1" type="primary">rlmN</name>
    <name type="ordered locus">HCH_04459</name>
</gene>
<proteinExistence type="inferred from homology"/>
<accession>Q2SDW1</accession>
<feature type="chain" id="PRO_0000350206" description="Dual-specificity RNA methyltransferase RlmN">
    <location>
        <begin position="1"/>
        <end position="378"/>
    </location>
</feature>
<feature type="domain" description="Radical SAM core" evidence="2">
    <location>
        <begin position="102"/>
        <end position="340"/>
    </location>
</feature>
<feature type="active site" description="Proton acceptor" evidence="1">
    <location>
        <position position="96"/>
    </location>
</feature>
<feature type="active site" description="S-methylcysteine intermediate" evidence="1">
    <location>
        <position position="345"/>
    </location>
</feature>
<feature type="binding site" evidence="1">
    <location>
        <position position="116"/>
    </location>
    <ligand>
        <name>[4Fe-4S] cluster</name>
        <dbReference type="ChEBI" id="CHEBI:49883"/>
        <note>4Fe-4S-S-AdoMet</note>
    </ligand>
</feature>
<feature type="binding site" evidence="1">
    <location>
        <position position="120"/>
    </location>
    <ligand>
        <name>[4Fe-4S] cluster</name>
        <dbReference type="ChEBI" id="CHEBI:49883"/>
        <note>4Fe-4S-S-AdoMet</note>
    </ligand>
</feature>
<feature type="binding site" evidence="1">
    <location>
        <position position="123"/>
    </location>
    <ligand>
        <name>[4Fe-4S] cluster</name>
        <dbReference type="ChEBI" id="CHEBI:49883"/>
        <note>4Fe-4S-S-AdoMet</note>
    </ligand>
</feature>
<feature type="binding site" evidence="1">
    <location>
        <begin position="170"/>
        <end position="171"/>
    </location>
    <ligand>
        <name>S-adenosyl-L-methionine</name>
        <dbReference type="ChEBI" id="CHEBI:59789"/>
    </ligand>
</feature>
<feature type="binding site" evidence="1">
    <location>
        <position position="202"/>
    </location>
    <ligand>
        <name>S-adenosyl-L-methionine</name>
        <dbReference type="ChEBI" id="CHEBI:59789"/>
    </ligand>
</feature>
<feature type="binding site" evidence="1">
    <location>
        <begin position="224"/>
        <end position="226"/>
    </location>
    <ligand>
        <name>S-adenosyl-L-methionine</name>
        <dbReference type="ChEBI" id="CHEBI:59789"/>
    </ligand>
</feature>
<feature type="binding site" evidence="1">
    <location>
        <position position="302"/>
    </location>
    <ligand>
        <name>S-adenosyl-L-methionine</name>
        <dbReference type="ChEBI" id="CHEBI:59789"/>
    </ligand>
</feature>
<feature type="disulfide bond" description="(transient)" evidence="1">
    <location>
        <begin position="109"/>
        <end position="345"/>
    </location>
</feature>
<name>RLMN_HAHCH</name>
<dbReference type="EC" id="2.1.1.192" evidence="1"/>
<dbReference type="EMBL" id="CP000155">
    <property type="protein sequence ID" value="ABC31163.1"/>
    <property type="molecule type" value="Genomic_DNA"/>
</dbReference>
<dbReference type="RefSeq" id="WP_011398230.1">
    <property type="nucleotide sequence ID" value="NC_007645.1"/>
</dbReference>
<dbReference type="SMR" id="Q2SDW1"/>
<dbReference type="STRING" id="349521.HCH_04459"/>
<dbReference type="KEGG" id="hch:HCH_04459"/>
<dbReference type="eggNOG" id="COG0820">
    <property type="taxonomic scope" value="Bacteria"/>
</dbReference>
<dbReference type="HOGENOM" id="CLU_029101_0_0_6"/>
<dbReference type="OrthoDB" id="9793973at2"/>
<dbReference type="Proteomes" id="UP000000238">
    <property type="component" value="Chromosome"/>
</dbReference>
<dbReference type="GO" id="GO:0005737">
    <property type="term" value="C:cytoplasm"/>
    <property type="evidence" value="ECO:0007669"/>
    <property type="project" value="UniProtKB-SubCell"/>
</dbReference>
<dbReference type="GO" id="GO:0051539">
    <property type="term" value="F:4 iron, 4 sulfur cluster binding"/>
    <property type="evidence" value="ECO:0007669"/>
    <property type="project" value="UniProtKB-UniRule"/>
</dbReference>
<dbReference type="GO" id="GO:0046872">
    <property type="term" value="F:metal ion binding"/>
    <property type="evidence" value="ECO:0007669"/>
    <property type="project" value="UniProtKB-KW"/>
</dbReference>
<dbReference type="GO" id="GO:0070040">
    <property type="term" value="F:rRNA (adenine(2503)-C2-)-methyltransferase activity"/>
    <property type="evidence" value="ECO:0007669"/>
    <property type="project" value="UniProtKB-UniRule"/>
</dbReference>
<dbReference type="GO" id="GO:0019843">
    <property type="term" value="F:rRNA binding"/>
    <property type="evidence" value="ECO:0007669"/>
    <property type="project" value="UniProtKB-UniRule"/>
</dbReference>
<dbReference type="GO" id="GO:0002935">
    <property type="term" value="F:tRNA (adenine(37)-C2)-methyltransferase activity"/>
    <property type="evidence" value="ECO:0007669"/>
    <property type="project" value="UniProtKB-UniRule"/>
</dbReference>
<dbReference type="GO" id="GO:0000049">
    <property type="term" value="F:tRNA binding"/>
    <property type="evidence" value="ECO:0007669"/>
    <property type="project" value="UniProtKB-UniRule"/>
</dbReference>
<dbReference type="GO" id="GO:0070475">
    <property type="term" value="P:rRNA base methylation"/>
    <property type="evidence" value="ECO:0007669"/>
    <property type="project" value="UniProtKB-UniRule"/>
</dbReference>
<dbReference type="GO" id="GO:0030488">
    <property type="term" value="P:tRNA methylation"/>
    <property type="evidence" value="ECO:0007669"/>
    <property type="project" value="UniProtKB-UniRule"/>
</dbReference>
<dbReference type="CDD" id="cd01335">
    <property type="entry name" value="Radical_SAM"/>
    <property type="match status" value="1"/>
</dbReference>
<dbReference type="FunFam" id="1.10.150.530:FF:000003">
    <property type="entry name" value="Dual-specificity RNA methyltransferase RlmN"/>
    <property type="match status" value="1"/>
</dbReference>
<dbReference type="FunFam" id="3.20.20.70:FF:000008">
    <property type="entry name" value="Dual-specificity RNA methyltransferase RlmN"/>
    <property type="match status" value="1"/>
</dbReference>
<dbReference type="Gene3D" id="1.10.150.530">
    <property type="match status" value="1"/>
</dbReference>
<dbReference type="Gene3D" id="3.20.20.70">
    <property type="entry name" value="Aldolase class I"/>
    <property type="match status" value="1"/>
</dbReference>
<dbReference type="HAMAP" id="MF_01849">
    <property type="entry name" value="RNA_methyltr_RlmN"/>
    <property type="match status" value="1"/>
</dbReference>
<dbReference type="InterPro" id="IPR013785">
    <property type="entry name" value="Aldolase_TIM"/>
</dbReference>
<dbReference type="InterPro" id="IPR006638">
    <property type="entry name" value="Elp3/MiaA/NifB-like_rSAM"/>
</dbReference>
<dbReference type="InterPro" id="IPR040072">
    <property type="entry name" value="Methyltransferase_A"/>
</dbReference>
<dbReference type="InterPro" id="IPR048641">
    <property type="entry name" value="RlmN_N"/>
</dbReference>
<dbReference type="InterPro" id="IPR027492">
    <property type="entry name" value="RNA_MTrfase_RlmN"/>
</dbReference>
<dbReference type="InterPro" id="IPR004383">
    <property type="entry name" value="rRNA_lsu_MTrfase_RlmN/Cfr"/>
</dbReference>
<dbReference type="InterPro" id="IPR007197">
    <property type="entry name" value="rSAM"/>
</dbReference>
<dbReference type="NCBIfam" id="TIGR00048">
    <property type="entry name" value="rRNA_mod_RlmN"/>
    <property type="match status" value="1"/>
</dbReference>
<dbReference type="PANTHER" id="PTHR30544">
    <property type="entry name" value="23S RRNA METHYLTRANSFERASE"/>
    <property type="match status" value="1"/>
</dbReference>
<dbReference type="PANTHER" id="PTHR30544:SF5">
    <property type="entry name" value="RADICAL SAM CORE DOMAIN-CONTAINING PROTEIN"/>
    <property type="match status" value="1"/>
</dbReference>
<dbReference type="Pfam" id="PF04055">
    <property type="entry name" value="Radical_SAM"/>
    <property type="match status" value="1"/>
</dbReference>
<dbReference type="Pfam" id="PF21016">
    <property type="entry name" value="RlmN_N"/>
    <property type="match status" value="1"/>
</dbReference>
<dbReference type="PIRSF" id="PIRSF006004">
    <property type="entry name" value="CHP00048"/>
    <property type="match status" value="1"/>
</dbReference>
<dbReference type="SFLD" id="SFLDF00275">
    <property type="entry name" value="adenosine_C2_methyltransferase"/>
    <property type="match status" value="1"/>
</dbReference>
<dbReference type="SFLD" id="SFLDG01062">
    <property type="entry name" value="methyltransferase_(Class_A)"/>
    <property type="match status" value="1"/>
</dbReference>
<dbReference type="SMART" id="SM00729">
    <property type="entry name" value="Elp3"/>
    <property type="match status" value="1"/>
</dbReference>
<dbReference type="SUPFAM" id="SSF102114">
    <property type="entry name" value="Radical SAM enzymes"/>
    <property type="match status" value="1"/>
</dbReference>
<dbReference type="PROSITE" id="PS51918">
    <property type="entry name" value="RADICAL_SAM"/>
    <property type="match status" value="1"/>
</dbReference>
<organism>
    <name type="scientific">Hahella chejuensis (strain KCTC 2396)</name>
    <dbReference type="NCBI Taxonomy" id="349521"/>
    <lineage>
        <taxon>Bacteria</taxon>
        <taxon>Pseudomonadati</taxon>
        <taxon>Pseudomonadota</taxon>
        <taxon>Gammaproteobacteria</taxon>
        <taxon>Oceanospirillales</taxon>
        <taxon>Hahellaceae</taxon>
        <taxon>Hahella</taxon>
    </lineage>
</organism>
<sequence>MSGSSAKINLLGMNRSDLETFFESLGEKKFRATQLMKWMYHLGVSDFDLMTNMSKALREKLKEVAEVSVPEVIYEDISADGTRKWVMRLAGGNSIETVYIPDNGRGTLCVSSQIGCSLDCSFCSTGKQGFNRNLSSAEIIGQLWIAARSFGDYDLSKERYVTNIVFMGMGEPLLNFDNVVRACDVMMDDFGFGISKRRLTVSTSGLVPALDKLGDVTDVSLAISLHAPNNSLRDVLVPVNKKYPIEELLAACHRYLGKLSDKRRITVEYTLIAGVNDSETHAHELRDLLRDLPCKINLIPFNPFPNSGYERPSRNATLRFQKVLSDAGYVATVRTTRGDDIDAACGQLVGRVEDRTRRSQKYIPLQNINVSPDGRASV</sequence>